<gene>
    <name evidence="1" type="primary">mraZ</name>
    <name type="ordered locus">RL3316</name>
</gene>
<evidence type="ECO:0000255" key="1">
    <source>
        <dbReference type="HAMAP-Rule" id="MF_01008"/>
    </source>
</evidence>
<evidence type="ECO:0000255" key="2">
    <source>
        <dbReference type="PROSITE-ProRule" id="PRU01076"/>
    </source>
</evidence>
<evidence type="ECO:0000305" key="3"/>
<sequence>MSRFLSNATNRIDAKGRVSVPSAFRSVLAQRNVQELYCFQDFVFPAISIGGPDLLERFERQIAAEDPFSPDANEMSLLIHGGGVFMKLDAEGRLMVTDFIRGFTGISDEVTFVGRADHFQLWQPQAFVAAQAQARGERKLAGKRS</sequence>
<name>MRAZ_RHIJ3</name>
<feature type="chain" id="PRO_0000318890" description="Transcriptional regulator MraZ">
    <location>
        <begin position="1"/>
        <end position="145"/>
    </location>
</feature>
<feature type="domain" description="SpoVT-AbrB 1" evidence="2">
    <location>
        <begin position="7"/>
        <end position="54"/>
    </location>
</feature>
<feature type="domain" description="SpoVT-AbrB 2" evidence="2">
    <location>
        <begin position="83"/>
        <end position="126"/>
    </location>
</feature>
<organism>
    <name type="scientific">Rhizobium johnstonii (strain DSM 114642 / LMG 32736 / 3841)</name>
    <name type="common">Rhizobium leguminosarum bv. viciae</name>
    <dbReference type="NCBI Taxonomy" id="216596"/>
    <lineage>
        <taxon>Bacteria</taxon>
        <taxon>Pseudomonadati</taxon>
        <taxon>Pseudomonadota</taxon>
        <taxon>Alphaproteobacteria</taxon>
        <taxon>Hyphomicrobiales</taxon>
        <taxon>Rhizobiaceae</taxon>
        <taxon>Rhizobium/Agrobacterium group</taxon>
        <taxon>Rhizobium</taxon>
        <taxon>Rhizobium johnstonii</taxon>
    </lineage>
</organism>
<accession>Q1ME24</accession>
<comment type="subunit">
    <text evidence="1">Forms oligomers.</text>
</comment>
<comment type="subcellular location">
    <subcellularLocation>
        <location evidence="1">Cytoplasm</location>
        <location evidence="1">Nucleoid</location>
    </subcellularLocation>
</comment>
<comment type="similarity">
    <text evidence="1">Belongs to the MraZ family.</text>
</comment>
<comment type="sequence caution" evidence="3">
    <conflict type="erroneous initiation">
        <sequence resource="EMBL-CDS" id="CAK08803"/>
    </conflict>
</comment>
<reference key="1">
    <citation type="journal article" date="2006" name="Genome Biol.">
        <title>The genome of Rhizobium leguminosarum has recognizable core and accessory components.</title>
        <authorList>
            <person name="Young J.P.W."/>
            <person name="Crossman L.C."/>
            <person name="Johnston A.W.B."/>
            <person name="Thomson N.R."/>
            <person name="Ghazoui Z.F."/>
            <person name="Hull K.H."/>
            <person name="Wexler M."/>
            <person name="Curson A.R.J."/>
            <person name="Todd J.D."/>
            <person name="Poole P.S."/>
            <person name="Mauchline T.H."/>
            <person name="East A.K."/>
            <person name="Quail M.A."/>
            <person name="Churcher C."/>
            <person name="Arrowsmith C."/>
            <person name="Cherevach I."/>
            <person name="Chillingworth T."/>
            <person name="Clarke K."/>
            <person name="Cronin A."/>
            <person name="Davis P."/>
            <person name="Fraser A."/>
            <person name="Hance Z."/>
            <person name="Hauser H."/>
            <person name="Jagels K."/>
            <person name="Moule S."/>
            <person name="Mungall K."/>
            <person name="Norbertczak H."/>
            <person name="Rabbinowitsch E."/>
            <person name="Sanders M."/>
            <person name="Simmonds M."/>
            <person name="Whitehead S."/>
            <person name="Parkhill J."/>
        </authorList>
    </citation>
    <scope>NUCLEOTIDE SEQUENCE [LARGE SCALE GENOMIC DNA]</scope>
    <source>
        <strain>DSM 114642 / LMG 32736 / 3841</strain>
    </source>
</reference>
<dbReference type="EMBL" id="AM236080">
    <property type="protein sequence ID" value="CAK08803.1"/>
    <property type="status" value="ALT_INIT"/>
    <property type="molecule type" value="Genomic_DNA"/>
</dbReference>
<dbReference type="RefSeq" id="WP_025395324.1">
    <property type="nucleotide sequence ID" value="NC_008380.1"/>
</dbReference>
<dbReference type="SMR" id="Q1ME24"/>
<dbReference type="EnsemblBacteria" id="CAK08803">
    <property type="protein sequence ID" value="CAK08803"/>
    <property type="gene ID" value="RL3316"/>
</dbReference>
<dbReference type="KEGG" id="rle:RL3316"/>
<dbReference type="eggNOG" id="COG2001">
    <property type="taxonomic scope" value="Bacteria"/>
</dbReference>
<dbReference type="HOGENOM" id="CLU_107907_1_0_5"/>
<dbReference type="Proteomes" id="UP000006575">
    <property type="component" value="Chromosome"/>
</dbReference>
<dbReference type="GO" id="GO:0005737">
    <property type="term" value="C:cytoplasm"/>
    <property type="evidence" value="ECO:0007669"/>
    <property type="project" value="UniProtKB-UniRule"/>
</dbReference>
<dbReference type="GO" id="GO:0009295">
    <property type="term" value="C:nucleoid"/>
    <property type="evidence" value="ECO:0007669"/>
    <property type="project" value="UniProtKB-SubCell"/>
</dbReference>
<dbReference type="GO" id="GO:0003700">
    <property type="term" value="F:DNA-binding transcription factor activity"/>
    <property type="evidence" value="ECO:0007669"/>
    <property type="project" value="UniProtKB-UniRule"/>
</dbReference>
<dbReference type="GO" id="GO:0000976">
    <property type="term" value="F:transcription cis-regulatory region binding"/>
    <property type="evidence" value="ECO:0007669"/>
    <property type="project" value="TreeGrafter"/>
</dbReference>
<dbReference type="GO" id="GO:2000143">
    <property type="term" value="P:negative regulation of DNA-templated transcription initiation"/>
    <property type="evidence" value="ECO:0007669"/>
    <property type="project" value="TreeGrafter"/>
</dbReference>
<dbReference type="CDD" id="cd16321">
    <property type="entry name" value="MraZ_C"/>
    <property type="match status" value="1"/>
</dbReference>
<dbReference type="CDD" id="cd16320">
    <property type="entry name" value="MraZ_N"/>
    <property type="match status" value="1"/>
</dbReference>
<dbReference type="Gene3D" id="3.40.1550.20">
    <property type="entry name" value="Transcriptional regulator MraZ domain"/>
    <property type="match status" value="1"/>
</dbReference>
<dbReference type="HAMAP" id="MF_01008">
    <property type="entry name" value="MraZ"/>
    <property type="match status" value="1"/>
</dbReference>
<dbReference type="InterPro" id="IPR003444">
    <property type="entry name" value="MraZ"/>
</dbReference>
<dbReference type="InterPro" id="IPR035644">
    <property type="entry name" value="MraZ_C"/>
</dbReference>
<dbReference type="InterPro" id="IPR020603">
    <property type="entry name" value="MraZ_dom"/>
</dbReference>
<dbReference type="InterPro" id="IPR035642">
    <property type="entry name" value="MraZ_N"/>
</dbReference>
<dbReference type="InterPro" id="IPR038619">
    <property type="entry name" value="MraZ_sf"/>
</dbReference>
<dbReference type="InterPro" id="IPR007159">
    <property type="entry name" value="SpoVT-AbrB_dom"/>
</dbReference>
<dbReference type="InterPro" id="IPR037914">
    <property type="entry name" value="SpoVT-AbrB_sf"/>
</dbReference>
<dbReference type="NCBIfam" id="NF001477">
    <property type="entry name" value="PRK00326.2-4"/>
    <property type="match status" value="1"/>
</dbReference>
<dbReference type="PANTHER" id="PTHR34701">
    <property type="entry name" value="TRANSCRIPTIONAL REGULATOR MRAZ"/>
    <property type="match status" value="1"/>
</dbReference>
<dbReference type="PANTHER" id="PTHR34701:SF1">
    <property type="entry name" value="TRANSCRIPTIONAL REGULATOR MRAZ"/>
    <property type="match status" value="1"/>
</dbReference>
<dbReference type="Pfam" id="PF02381">
    <property type="entry name" value="MraZ"/>
    <property type="match status" value="1"/>
</dbReference>
<dbReference type="SUPFAM" id="SSF89447">
    <property type="entry name" value="AbrB/MazE/MraZ-like"/>
    <property type="match status" value="1"/>
</dbReference>
<dbReference type="PROSITE" id="PS51740">
    <property type="entry name" value="SPOVT_ABRB"/>
    <property type="match status" value="2"/>
</dbReference>
<keyword id="KW-0963">Cytoplasm</keyword>
<keyword id="KW-0238">DNA-binding</keyword>
<keyword id="KW-0677">Repeat</keyword>
<keyword id="KW-0804">Transcription</keyword>
<keyword id="KW-0805">Transcription regulation</keyword>
<protein>
    <recommendedName>
        <fullName>Transcriptional regulator MraZ</fullName>
    </recommendedName>
</protein>
<proteinExistence type="inferred from homology"/>